<sequence>MPPIELSQTQFEQHFGYASQQTVFAPGRVNIIGEHTDYNDGFVMPCAINYGMSVSFAKRDDSIWRVYAIDINETDAFDIKKEIPQSEDKWKNYVRGVVKYIQERCPEFIQGADIAMTSDVPMSSGLSSSAALEISIGKTCQVLGNLPISLAEIALIGQRAENKFVGANCGNMDQLTSALGQKDHLVMIDCRSLDISPTPVPQGYFIAIINSNVKHDLVTGEYNSRRQECEFAAQFFGVKALRDVSPEQFIERAAELQQLNELAYKRAKHVISENHRVLEAVEALKANDMQKLGVLMGESHDSMRDDFEITIPEIDYLVELAQVAIGKNGGARMTGGGFGGCIICLVPNEKVEALRKLIAENYQKQTGIQETFYVCTASDGVRVV</sequence>
<feature type="chain" id="PRO_1000125380" description="Galactokinase">
    <location>
        <begin position="1"/>
        <end position="384"/>
    </location>
</feature>
<feature type="active site" description="Proton acceptor" evidence="1">
    <location>
        <position position="173"/>
    </location>
</feature>
<feature type="binding site" evidence="1">
    <location>
        <begin position="34"/>
        <end position="37"/>
    </location>
    <ligand>
        <name>substrate</name>
    </ligand>
</feature>
<feature type="binding site" evidence="1">
    <location>
        <begin position="123"/>
        <end position="129"/>
    </location>
    <ligand>
        <name>ATP</name>
        <dbReference type="ChEBI" id="CHEBI:30616"/>
    </ligand>
</feature>
<feature type="binding site" evidence="1">
    <location>
        <position position="129"/>
    </location>
    <ligand>
        <name>Mg(2+)</name>
        <dbReference type="ChEBI" id="CHEBI:18420"/>
    </ligand>
</feature>
<feature type="binding site" evidence="1">
    <location>
        <position position="161"/>
    </location>
    <ligand>
        <name>Mg(2+)</name>
        <dbReference type="ChEBI" id="CHEBI:18420"/>
    </ligand>
</feature>
<feature type="binding site" evidence="1">
    <location>
        <position position="222"/>
    </location>
    <ligand>
        <name>substrate</name>
    </ligand>
</feature>
<feature type="site" description="Transition state stabilizer" evidence="1">
    <location>
        <position position="28"/>
    </location>
</feature>
<keyword id="KW-0067">ATP-binding</keyword>
<keyword id="KW-0119">Carbohydrate metabolism</keyword>
<keyword id="KW-0963">Cytoplasm</keyword>
<keyword id="KW-0299">Galactose metabolism</keyword>
<keyword id="KW-0418">Kinase</keyword>
<keyword id="KW-0460">Magnesium</keyword>
<keyword id="KW-0479">Metal-binding</keyword>
<keyword id="KW-0547">Nucleotide-binding</keyword>
<keyword id="KW-1185">Reference proteome</keyword>
<keyword id="KW-0808">Transferase</keyword>
<proteinExistence type="inferred from homology"/>
<organism>
    <name type="scientific">Glaesserella parasuis serovar 5 (strain SH0165)</name>
    <name type="common">Haemophilus parasuis</name>
    <dbReference type="NCBI Taxonomy" id="557723"/>
    <lineage>
        <taxon>Bacteria</taxon>
        <taxon>Pseudomonadati</taxon>
        <taxon>Pseudomonadota</taxon>
        <taxon>Gammaproteobacteria</taxon>
        <taxon>Pasteurellales</taxon>
        <taxon>Pasteurellaceae</taxon>
        <taxon>Glaesserella</taxon>
    </lineage>
</organism>
<protein>
    <recommendedName>
        <fullName evidence="1">Galactokinase</fullName>
        <ecNumber evidence="1">2.7.1.6</ecNumber>
    </recommendedName>
    <alternativeName>
        <fullName evidence="1">Galactose kinase</fullName>
    </alternativeName>
</protein>
<name>GAL1_GLAP5</name>
<dbReference type="EC" id="2.7.1.6" evidence="1"/>
<dbReference type="EMBL" id="CP001321">
    <property type="protein sequence ID" value="ACL33229.1"/>
    <property type="molecule type" value="Genomic_DNA"/>
</dbReference>
<dbReference type="RefSeq" id="WP_005713533.1">
    <property type="nucleotide sequence ID" value="NC_011852.1"/>
</dbReference>
<dbReference type="SMR" id="B8F7C7"/>
<dbReference type="STRING" id="557723.HAPS_1691"/>
<dbReference type="GeneID" id="66619840"/>
<dbReference type="KEGG" id="hap:HAPS_1691"/>
<dbReference type="HOGENOM" id="CLU_017814_2_1_6"/>
<dbReference type="UniPathway" id="UPA00214"/>
<dbReference type="Proteomes" id="UP000006743">
    <property type="component" value="Chromosome"/>
</dbReference>
<dbReference type="GO" id="GO:0005829">
    <property type="term" value="C:cytosol"/>
    <property type="evidence" value="ECO:0007669"/>
    <property type="project" value="TreeGrafter"/>
</dbReference>
<dbReference type="GO" id="GO:0005524">
    <property type="term" value="F:ATP binding"/>
    <property type="evidence" value="ECO:0007669"/>
    <property type="project" value="UniProtKB-UniRule"/>
</dbReference>
<dbReference type="GO" id="GO:0004335">
    <property type="term" value="F:galactokinase activity"/>
    <property type="evidence" value="ECO:0007669"/>
    <property type="project" value="UniProtKB-UniRule"/>
</dbReference>
<dbReference type="GO" id="GO:0000287">
    <property type="term" value="F:magnesium ion binding"/>
    <property type="evidence" value="ECO:0007669"/>
    <property type="project" value="UniProtKB-UniRule"/>
</dbReference>
<dbReference type="GO" id="GO:0006012">
    <property type="term" value="P:galactose metabolic process"/>
    <property type="evidence" value="ECO:0007669"/>
    <property type="project" value="UniProtKB-UniRule"/>
</dbReference>
<dbReference type="FunFam" id="3.30.230.10:FF:000017">
    <property type="entry name" value="Galactokinase"/>
    <property type="match status" value="1"/>
</dbReference>
<dbReference type="FunFam" id="3.30.70.890:FF:000001">
    <property type="entry name" value="Galactokinase"/>
    <property type="match status" value="1"/>
</dbReference>
<dbReference type="Gene3D" id="3.30.230.10">
    <property type="match status" value="1"/>
</dbReference>
<dbReference type="Gene3D" id="3.30.70.890">
    <property type="entry name" value="GHMP kinase, C-terminal domain"/>
    <property type="match status" value="1"/>
</dbReference>
<dbReference type="HAMAP" id="MF_00246">
    <property type="entry name" value="Galactokinase"/>
    <property type="match status" value="1"/>
</dbReference>
<dbReference type="InterPro" id="IPR000705">
    <property type="entry name" value="Galactokinase"/>
</dbReference>
<dbReference type="InterPro" id="IPR022963">
    <property type="entry name" value="Galactokinase_bac"/>
</dbReference>
<dbReference type="InterPro" id="IPR019741">
    <property type="entry name" value="Galactokinase_CS"/>
</dbReference>
<dbReference type="InterPro" id="IPR019539">
    <property type="entry name" value="GalKase_N"/>
</dbReference>
<dbReference type="InterPro" id="IPR013750">
    <property type="entry name" value="GHMP_kinase_C_dom"/>
</dbReference>
<dbReference type="InterPro" id="IPR036554">
    <property type="entry name" value="GHMP_kinase_C_sf"/>
</dbReference>
<dbReference type="InterPro" id="IPR006204">
    <property type="entry name" value="GHMP_kinase_N_dom"/>
</dbReference>
<dbReference type="InterPro" id="IPR006203">
    <property type="entry name" value="GHMP_knse_ATP-bd_CS"/>
</dbReference>
<dbReference type="InterPro" id="IPR006206">
    <property type="entry name" value="Mevalonate/galactokinase"/>
</dbReference>
<dbReference type="InterPro" id="IPR020568">
    <property type="entry name" value="Ribosomal_Su5_D2-typ_SF"/>
</dbReference>
<dbReference type="InterPro" id="IPR014721">
    <property type="entry name" value="Ribsml_uS5_D2-typ_fold_subgr"/>
</dbReference>
<dbReference type="NCBIfam" id="TIGR00131">
    <property type="entry name" value="gal_kin"/>
    <property type="match status" value="1"/>
</dbReference>
<dbReference type="NCBIfam" id="NF003472">
    <property type="entry name" value="PRK05101.1"/>
    <property type="match status" value="1"/>
</dbReference>
<dbReference type="PANTHER" id="PTHR10457:SF7">
    <property type="entry name" value="GALACTOKINASE-RELATED"/>
    <property type="match status" value="1"/>
</dbReference>
<dbReference type="PANTHER" id="PTHR10457">
    <property type="entry name" value="MEVALONATE KINASE/GALACTOKINASE"/>
    <property type="match status" value="1"/>
</dbReference>
<dbReference type="Pfam" id="PF10509">
    <property type="entry name" value="GalKase_gal_bdg"/>
    <property type="match status" value="1"/>
</dbReference>
<dbReference type="Pfam" id="PF08544">
    <property type="entry name" value="GHMP_kinases_C"/>
    <property type="match status" value="1"/>
</dbReference>
<dbReference type="Pfam" id="PF00288">
    <property type="entry name" value="GHMP_kinases_N"/>
    <property type="match status" value="1"/>
</dbReference>
<dbReference type="PIRSF" id="PIRSF000530">
    <property type="entry name" value="Galactokinase"/>
    <property type="match status" value="1"/>
</dbReference>
<dbReference type="PRINTS" id="PR00473">
    <property type="entry name" value="GALCTOKINASE"/>
</dbReference>
<dbReference type="PRINTS" id="PR00959">
    <property type="entry name" value="MEVGALKINASE"/>
</dbReference>
<dbReference type="SUPFAM" id="SSF55060">
    <property type="entry name" value="GHMP Kinase, C-terminal domain"/>
    <property type="match status" value="1"/>
</dbReference>
<dbReference type="SUPFAM" id="SSF54211">
    <property type="entry name" value="Ribosomal protein S5 domain 2-like"/>
    <property type="match status" value="1"/>
</dbReference>
<dbReference type="PROSITE" id="PS00106">
    <property type="entry name" value="GALACTOKINASE"/>
    <property type="match status" value="1"/>
</dbReference>
<dbReference type="PROSITE" id="PS00627">
    <property type="entry name" value="GHMP_KINASES_ATP"/>
    <property type="match status" value="1"/>
</dbReference>
<reference key="1">
    <citation type="journal article" date="2009" name="J. Bacteriol.">
        <title>Complete genome sequence of Haemophilus parasuis SH0165.</title>
        <authorList>
            <person name="Yue M."/>
            <person name="Yang F."/>
            <person name="Yang J."/>
            <person name="Bei W."/>
            <person name="Cai X."/>
            <person name="Chen L."/>
            <person name="Dong J."/>
            <person name="Zhou R."/>
            <person name="Jin M."/>
            <person name="Jin Q."/>
            <person name="Chen H."/>
        </authorList>
    </citation>
    <scope>NUCLEOTIDE SEQUENCE [LARGE SCALE GENOMIC DNA]</scope>
    <source>
        <strain>SH0165</strain>
    </source>
</reference>
<evidence type="ECO:0000255" key="1">
    <source>
        <dbReference type="HAMAP-Rule" id="MF_00246"/>
    </source>
</evidence>
<gene>
    <name evidence="1" type="primary">galK</name>
    <name type="ordered locus">HAPS_1691</name>
</gene>
<accession>B8F7C7</accession>
<comment type="function">
    <text evidence="1">Catalyzes the transfer of the gamma-phosphate of ATP to D-galactose to form alpha-D-galactose-1-phosphate (Gal-1-P).</text>
</comment>
<comment type="catalytic activity">
    <reaction evidence="1">
        <text>alpha-D-galactose + ATP = alpha-D-galactose 1-phosphate + ADP + H(+)</text>
        <dbReference type="Rhea" id="RHEA:13553"/>
        <dbReference type="ChEBI" id="CHEBI:15378"/>
        <dbReference type="ChEBI" id="CHEBI:28061"/>
        <dbReference type="ChEBI" id="CHEBI:30616"/>
        <dbReference type="ChEBI" id="CHEBI:58336"/>
        <dbReference type="ChEBI" id="CHEBI:456216"/>
        <dbReference type="EC" id="2.7.1.6"/>
    </reaction>
</comment>
<comment type="pathway">
    <text evidence="1">Carbohydrate metabolism; galactose metabolism.</text>
</comment>
<comment type="subcellular location">
    <subcellularLocation>
        <location evidence="1">Cytoplasm</location>
    </subcellularLocation>
</comment>
<comment type="similarity">
    <text evidence="1">Belongs to the GHMP kinase family. GalK subfamily.</text>
</comment>